<accession>Q5WV42</accession>
<evidence type="ECO:0000255" key="1">
    <source>
        <dbReference type="HAMAP-Rule" id="MF_00434"/>
    </source>
</evidence>
<reference key="1">
    <citation type="journal article" date="2004" name="Nat. Genet.">
        <title>Evidence in the Legionella pneumophila genome for exploitation of host cell functions and high genome plasticity.</title>
        <authorList>
            <person name="Cazalet C."/>
            <person name="Rusniok C."/>
            <person name="Brueggemann H."/>
            <person name="Zidane N."/>
            <person name="Magnier A."/>
            <person name="Ma L."/>
            <person name="Tichit M."/>
            <person name="Jarraud S."/>
            <person name="Bouchier C."/>
            <person name="Vandenesch F."/>
            <person name="Kunst F."/>
            <person name="Etienne J."/>
            <person name="Glaser P."/>
            <person name="Buchrieser C."/>
        </authorList>
    </citation>
    <scope>NUCLEOTIDE SEQUENCE [LARGE SCALE GENOMIC DNA]</scope>
    <source>
        <strain>Lens</strain>
    </source>
</reference>
<organism>
    <name type="scientific">Legionella pneumophila (strain Lens)</name>
    <dbReference type="NCBI Taxonomy" id="297245"/>
    <lineage>
        <taxon>Bacteria</taxon>
        <taxon>Pseudomonadati</taxon>
        <taxon>Pseudomonadota</taxon>
        <taxon>Gammaproteobacteria</taxon>
        <taxon>Legionellales</taxon>
        <taxon>Legionellaceae</taxon>
        <taxon>Legionella</taxon>
    </lineage>
</organism>
<dbReference type="EC" id="4.2.1.96" evidence="1"/>
<dbReference type="EMBL" id="CR628337">
    <property type="protein sequence ID" value="CAH16215.1"/>
    <property type="molecule type" value="Genomic_DNA"/>
</dbReference>
<dbReference type="RefSeq" id="WP_011215963.1">
    <property type="nucleotide sequence ID" value="NC_006369.1"/>
</dbReference>
<dbReference type="SMR" id="Q5WV42"/>
<dbReference type="KEGG" id="lpf:lpl1975"/>
<dbReference type="LegioList" id="lpl1975"/>
<dbReference type="HOGENOM" id="CLU_081974_2_1_6"/>
<dbReference type="Proteomes" id="UP000002517">
    <property type="component" value="Chromosome"/>
</dbReference>
<dbReference type="GO" id="GO:0008124">
    <property type="term" value="F:4-alpha-hydroxytetrahydrobiopterin dehydratase activity"/>
    <property type="evidence" value="ECO:0007669"/>
    <property type="project" value="UniProtKB-UniRule"/>
</dbReference>
<dbReference type="GO" id="GO:0006729">
    <property type="term" value="P:tetrahydrobiopterin biosynthetic process"/>
    <property type="evidence" value="ECO:0007669"/>
    <property type="project" value="InterPro"/>
</dbReference>
<dbReference type="CDD" id="cd00913">
    <property type="entry name" value="PCD_DCoH_subfamily_a"/>
    <property type="match status" value="1"/>
</dbReference>
<dbReference type="Gene3D" id="3.30.1360.20">
    <property type="entry name" value="Transcriptional coactivator/pterin dehydratase"/>
    <property type="match status" value="1"/>
</dbReference>
<dbReference type="HAMAP" id="MF_00434">
    <property type="entry name" value="Pterin_4_alpha"/>
    <property type="match status" value="1"/>
</dbReference>
<dbReference type="InterPro" id="IPR036428">
    <property type="entry name" value="PCD_sf"/>
</dbReference>
<dbReference type="InterPro" id="IPR001533">
    <property type="entry name" value="Pterin_deHydtase"/>
</dbReference>
<dbReference type="NCBIfam" id="NF002019">
    <property type="entry name" value="PRK00823.1-4"/>
    <property type="match status" value="1"/>
</dbReference>
<dbReference type="PANTHER" id="PTHR12599">
    <property type="entry name" value="PTERIN-4-ALPHA-CARBINOLAMINE DEHYDRATASE"/>
    <property type="match status" value="1"/>
</dbReference>
<dbReference type="PANTHER" id="PTHR12599:SF0">
    <property type="entry name" value="PTERIN-4-ALPHA-CARBINOLAMINE DEHYDRATASE"/>
    <property type="match status" value="1"/>
</dbReference>
<dbReference type="Pfam" id="PF01329">
    <property type="entry name" value="Pterin_4a"/>
    <property type="match status" value="1"/>
</dbReference>
<dbReference type="SUPFAM" id="SSF55248">
    <property type="entry name" value="PCD-like"/>
    <property type="match status" value="1"/>
</dbReference>
<comment type="catalytic activity">
    <reaction evidence="1">
        <text>(4aS,6R)-4a-hydroxy-L-erythro-5,6,7,8-tetrahydrobiopterin = (6R)-L-erythro-6,7-dihydrobiopterin + H2O</text>
        <dbReference type="Rhea" id="RHEA:11920"/>
        <dbReference type="ChEBI" id="CHEBI:15377"/>
        <dbReference type="ChEBI" id="CHEBI:15642"/>
        <dbReference type="ChEBI" id="CHEBI:43120"/>
        <dbReference type="EC" id="4.2.1.96"/>
    </reaction>
</comment>
<comment type="similarity">
    <text evidence="1">Belongs to the pterin-4-alpha-carbinolamine dehydratase family.</text>
</comment>
<feature type="chain" id="PRO_0000231450" description="Putative pterin-4-alpha-carbinolamine dehydratase">
    <location>
        <begin position="1"/>
        <end position="113"/>
    </location>
</feature>
<proteinExistence type="inferred from homology"/>
<name>PHS_LEGPL</name>
<keyword id="KW-0456">Lyase</keyword>
<sequence>MTSDLSSKHCESCEGIGAALNSEQIKNLLPQLNTKWEVTEDNRIIKRAFSFKNFYETMAFVNAIAWIANIENHHPDLEVGYNYCHVHFMTHALNGLTHNDFICAAKIDKLLVD</sequence>
<gene>
    <name type="ordered locus">lpl1975</name>
</gene>
<protein>
    <recommendedName>
        <fullName evidence="1">Putative pterin-4-alpha-carbinolamine dehydratase</fullName>
        <shortName evidence="1">PHS</shortName>
        <ecNumber evidence="1">4.2.1.96</ecNumber>
    </recommendedName>
    <alternativeName>
        <fullName evidence="1">4-alpha-hydroxy-tetrahydropterin dehydratase</fullName>
    </alternativeName>
    <alternativeName>
        <fullName evidence="1">Pterin carbinolamine dehydratase</fullName>
        <shortName evidence="1">PCD</shortName>
    </alternativeName>
</protein>